<evidence type="ECO:0000250" key="1"/>
<evidence type="ECO:0000250" key="2">
    <source>
        <dbReference type="UniProtKB" id="P13984"/>
    </source>
</evidence>
<evidence type="ECO:0000269" key="3">
    <source>
    </source>
</evidence>
<evidence type="ECO:0000305" key="4"/>
<evidence type="ECO:0007744" key="5">
    <source>
    </source>
</evidence>
<proteinExistence type="evidence at protein level"/>
<feature type="initiator methionine" description="Removed" evidence="2">
    <location>
        <position position="1"/>
    </location>
</feature>
<feature type="chain" id="PRO_0000211236" description="General transcription factor IIF subunit 2">
    <location>
        <begin position="2"/>
        <end position="249"/>
    </location>
</feature>
<feature type="binding site" evidence="2">
    <location>
        <position position="227"/>
    </location>
    <ligand>
        <name>DNA</name>
        <dbReference type="ChEBI" id="CHEBI:16991"/>
    </ligand>
</feature>
<feature type="binding site" evidence="2">
    <location>
        <position position="229"/>
    </location>
    <ligand>
        <name>DNA</name>
        <dbReference type="ChEBI" id="CHEBI:16991"/>
    </ligand>
</feature>
<feature type="modified residue" description="N-acetylalanine" evidence="2">
    <location>
        <position position="2"/>
    </location>
</feature>
<feature type="modified residue" description="N6-acetyllysine" evidence="2">
    <location>
        <position position="22"/>
    </location>
</feature>
<feature type="modified residue" description="N6-acetyllysine" evidence="2">
    <location>
        <position position="33"/>
    </location>
</feature>
<feature type="modified residue" description="N6-acetyllysine" evidence="5">
    <location>
        <position position="137"/>
    </location>
</feature>
<feature type="modified residue" description="Phosphoserine" evidence="2">
    <location>
        <position position="142"/>
    </location>
</feature>
<feature type="modified residue" description="Phosphoserine" evidence="2">
    <location>
        <position position="248"/>
    </location>
</feature>
<sequence>MAERGELDLTGAKQNTGVWLVKVPKYLSQQWAKASGRGEVGKLRIAKNQGRTEVSFTLNEDLANIHDIGGKPASVSAPREHPFVLQSVGGQTLTVFTESSSDKLSLEGIVVQRAECRPAASENYMKLKRLQIEESSKPVRLSQQLDKVVTTNYKPVANHQYNIEYERKKKEDGKRARADKQHVLDMLFSAFEKHQYYNLKDLVDITKQPVGYLKEILKEIGIQNVKGIHKNTWELKPEYRHYQTEEKSD</sequence>
<keyword id="KW-0007">Acetylation</keyword>
<keyword id="KW-0238">DNA-binding</keyword>
<keyword id="KW-0539">Nucleus</keyword>
<keyword id="KW-0597">Phosphoprotein</keyword>
<keyword id="KW-1185">Reference proteome</keyword>
<keyword id="KW-0804">Transcription</keyword>
<keyword id="KW-0805">Transcription regulation</keyword>
<name>T2FB_MOUSE</name>
<organism>
    <name type="scientific">Mus musculus</name>
    <name type="common">Mouse</name>
    <dbReference type="NCBI Taxonomy" id="10090"/>
    <lineage>
        <taxon>Eukaryota</taxon>
        <taxon>Metazoa</taxon>
        <taxon>Chordata</taxon>
        <taxon>Craniata</taxon>
        <taxon>Vertebrata</taxon>
        <taxon>Euteleostomi</taxon>
        <taxon>Mammalia</taxon>
        <taxon>Eutheria</taxon>
        <taxon>Euarchontoglires</taxon>
        <taxon>Glires</taxon>
        <taxon>Rodentia</taxon>
        <taxon>Myomorpha</taxon>
        <taxon>Muroidea</taxon>
        <taxon>Muridae</taxon>
        <taxon>Murinae</taxon>
        <taxon>Mus</taxon>
        <taxon>Mus</taxon>
    </lineage>
</organism>
<dbReference type="EMBL" id="BC027173">
    <property type="protein sequence ID" value="AAH27173.1"/>
    <property type="molecule type" value="mRNA"/>
</dbReference>
<dbReference type="CCDS" id="CCDS36981.1"/>
<dbReference type="RefSeq" id="NP_081092.1">
    <property type="nucleotide sequence ID" value="NM_026816.4"/>
</dbReference>
<dbReference type="SMR" id="Q8R0A0"/>
<dbReference type="BioGRID" id="213003">
    <property type="interactions" value="6"/>
</dbReference>
<dbReference type="ComplexPortal" id="CPX-83">
    <property type="entry name" value="General transcription factor TFIIF complex"/>
</dbReference>
<dbReference type="FunCoup" id="Q8R0A0">
    <property type="interactions" value="2929"/>
</dbReference>
<dbReference type="STRING" id="10090.ENSMUSP00000086312"/>
<dbReference type="GlyGen" id="Q8R0A0">
    <property type="glycosylation" value="2 sites, 1 O-linked glycan (2 sites)"/>
</dbReference>
<dbReference type="iPTMnet" id="Q8R0A0"/>
<dbReference type="PhosphoSitePlus" id="Q8R0A0"/>
<dbReference type="jPOST" id="Q8R0A0"/>
<dbReference type="PaxDb" id="10090-ENSMUSP00000086312"/>
<dbReference type="ProteomicsDB" id="263201"/>
<dbReference type="Pumba" id="Q8R0A0"/>
<dbReference type="Antibodypedia" id="1838">
    <property type="antibodies" value="273 antibodies from 30 providers"/>
</dbReference>
<dbReference type="DNASU" id="68705"/>
<dbReference type="Ensembl" id="ENSMUST00000088922.5">
    <property type="protein sequence ID" value="ENSMUSP00000086312.5"/>
    <property type="gene ID" value="ENSMUSG00000067995.5"/>
</dbReference>
<dbReference type="GeneID" id="68705"/>
<dbReference type="KEGG" id="mmu:68705"/>
<dbReference type="UCSC" id="uc007urb.1">
    <property type="organism name" value="mouse"/>
</dbReference>
<dbReference type="AGR" id="MGI:1915955"/>
<dbReference type="CTD" id="2963"/>
<dbReference type="MGI" id="MGI:1915955">
    <property type="gene designation" value="Gtf2f2"/>
</dbReference>
<dbReference type="VEuPathDB" id="HostDB:ENSMUSG00000067995"/>
<dbReference type="eggNOG" id="KOG2905">
    <property type="taxonomic scope" value="Eukaryota"/>
</dbReference>
<dbReference type="GeneTree" id="ENSGT00390000016051"/>
<dbReference type="HOGENOM" id="CLU_047858_1_0_1"/>
<dbReference type="InParanoid" id="Q8R0A0"/>
<dbReference type="OMA" id="PIADNCY"/>
<dbReference type="OrthoDB" id="26094at2759"/>
<dbReference type="PhylomeDB" id="Q8R0A0"/>
<dbReference type="TreeFam" id="TF314290"/>
<dbReference type="Reactome" id="R-MMU-112382">
    <property type="pathway name" value="Formation of RNA Pol II elongation complex"/>
</dbReference>
<dbReference type="Reactome" id="R-MMU-113418">
    <property type="pathway name" value="Formation of the Early Elongation Complex"/>
</dbReference>
<dbReference type="Reactome" id="R-MMU-674695">
    <property type="pathway name" value="RNA Polymerase II Pre-transcription Events"/>
</dbReference>
<dbReference type="Reactome" id="R-MMU-6796648">
    <property type="pathway name" value="TP53 Regulates Transcription of DNA Repair Genes"/>
</dbReference>
<dbReference type="Reactome" id="R-MMU-6803529">
    <property type="pathway name" value="FGFR2 alternative splicing"/>
</dbReference>
<dbReference type="Reactome" id="R-MMU-6807505">
    <property type="pathway name" value="RNA polymerase II transcribes snRNA genes"/>
</dbReference>
<dbReference type="Reactome" id="R-MMU-72086">
    <property type="pathway name" value="mRNA Capping"/>
</dbReference>
<dbReference type="Reactome" id="R-MMU-72163">
    <property type="pathway name" value="mRNA Splicing - Major Pathway"/>
</dbReference>
<dbReference type="Reactome" id="R-MMU-72165">
    <property type="pathway name" value="mRNA Splicing - Minor Pathway"/>
</dbReference>
<dbReference type="Reactome" id="R-MMU-72203">
    <property type="pathway name" value="Processing of Capped Intron-Containing Pre-mRNA"/>
</dbReference>
<dbReference type="Reactome" id="R-MMU-73776">
    <property type="pathway name" value="RNA Polymerase II Promoter Escape"/>
</dbReference>
<dbReference type="Reactome" id="R-MMU-73779">
    <property type="pathway name" value="RNA Polymerase II Transcription Pre-Initiation And Promoter Opening"/>
</dbReference>
<dbReference type="Reactome" id="R-MMU-75953">
    <property type="pathway name" value="RNA Polymerase II Transcription Initiation"/>
</dbReference>
<dbReference type="Reactome" id="R-MMU-75955">
    <property type="pathway name" value="RNA Polymerase II Transcription Elongation"/>
</dbReference>
<dbReference type="Reactome" id="R-MMU-76042">
    <property type="pathway name" value="RNA Polymerase II Transcription Initiation And Promoter Clearance"/>
</dbReference>
<dbReference type="Reactome" id="R-MMU-77075">
    <property type="pathway name" value="RNA Pol II CTD phosphorylation and interaction with CE"/>
</dbReference>
<dbReference type="Reactome" id="R-MMU-9018519">
    <property type="pathway name" value="Estrogen-dependent gene expression"/>
</dbReference>
<dbReference type="BioGRID-ORCS" id="68705">
    <property type="hits" value="21 hits in 81 CRISPR screens"/>
</dbReference>
<dbReference type="ChiTaRS" id="Gtf2f2">
    <property type="organism name" value="mouse"/>
</dbReference>
<dbReference type="PRO" id="PR:Q8R0A0"/>
<dbReference type="Proteomes" id="UP000000589">
    <property type="component" value="Chromosome 14"/>
</dbReference>
<dbReference type="RNAct" id="Q8R0A0">
    <property type="molecule type" value="protein"/>
</dbReference>
<dbReference type="Bgee" id="ENSMUSG00000067995">
    <property type="expression patterns" value="Expressed in epiblast cell in embryo and 263 other cell types or tissues"/>
</dbReference>
<dbReference type="ExpressionAtlas" id="Q8R0A0">
    <property type="expression patterns" value="baseline and differential"/>
</dbReference>
<dbReference type="GO" id="GO:0015630">
    <property type="term" value="C:microtubule cytoskeleton"/>
    <property type="evidence" value="ECO:0007669"/>
    <property type="project" value="Ensembl"/>
</dbReference>
<dbReference type="GO" id="GO:0005674">
    <property type="term" value="C:transcription factor TFIIF complex"/>
    <property type="evidence" value="ECO:0000266"/>
    <property type="project" value="ComplexPortal"/>
</dbReference>
<dbReference type="GO" id="GO:0003677">
    <property type="term" value="F:DNA binding"/>
    <property type="evidence" value="ECO:0007669"/>
    <property type="project" value="UniProtKB-KW"/>
</dbReference>
<dbReference type="GO" id="GO:0045944">
    <property type="term" value="P:positive regulation of transcription by RNA polymerase II"/>
    <property type="evidence" value="ECO:0000266"/>
    <property type="project" value="ComplexPortal"/>
</dbReference>
<dbReference type="GO" id="GO:0006366">
    <property type="term" value="P:transcription by RNA polymerase II"/>
    <property type="evidence" value="ECO:0000250"/>
    <property type="project" value="UniProtKB"/>
</dbReference>
<dbReference type="GO" id="GO:0006368">
    <property type="term" value="P:transcription elongation by RNA polymerase II"/>
    <property type="evidence" value="ECO:0000266"/>
    <property type="project" value="ComplexPortal"/>
</dbReference>
<dbReference type="GO" id="GO:0006367">
    <property type="term" value="P:transcription initiation at RNA polymerase II promoter"/>
    <property type="evidence" value="ECO:0000266"/>
    <property type="project" value="ComplexPortal"/>
</dbReference>
<dbReference type="CDD" id="cd07980">
    <property type="entry name" value="TFIIF_beta"/>
    <property type="match status" value="1"/>
</dbReference>
<dbReference type="FunFam" id="1.10.10.10:FF:000035">
    <property type="entry name" value="General transcription factor IIF subunit 2"/>
    <property type="match status" value="1"/>
</dbReference>
<dbReference type="Gene3D" id="1.10.10.10">
    <property type="entry name" value="Winged helix-like DNA-binding domain superfamily/Winged helix DNA-binding domain"/>
    <property type="match status" value="1"/>
</dbReference>
<dbReference type="InterPro" id="IPR003196">
    <property type="entry name" value="TFIIF_beta"/>
</dbReference>
<dbReference type="InterPro" id="IPR040450">
    <property type="entry name" value="TFIIF_beta_HTH"/>
</dbReference>
<dbReference type="InterPro" id="IPR040504">
    <property type="entry name" value="TFIIF_beta_N"/>
</dbReference>
<dbReference type="InterPro" id="IPR011039">
    <property type="entry name" value="TFIIF_interaction"/>
</dbReference>
<dbReference type="InterPro" id="IPR036388">
    <property type="entry name" value="WH-like_DNA-bd_sf"/>
</dbReference>
<dbReference type="InterPro" id="IPR036390">
    <property type="entry name" value="WH_DNA-bd_sf"/>
</dbReference>
<dbReference type="PANTHER" id="PTHR10445">
    <property type="entry name" value="GENERAL TRANSCRIPTION FACTOR IIF SUBUNIT 2"/>
    <property type="match status" value="1"/>
</dbReference>
<dbReference type="PANTHER" id="PTHR10445:SF0">
    <property type="entry name" value="GENERAL TRANSCRIPTION FACTOR IIF SUBUNIT 2"/>
    <property type="match status" value="1"/>
</dbReference>
<dbReference type="Pfam" id="PF02270">
    <property type="entry name" value="TFIIF_beta"/>
    <property type="match status" value="1"/>
</dbReference>
<dbReference type="Pfam" id="PF17683">
    <property type="entry name" value="TFIIF_beta_N"/>
    <property type="match status" value="1"/>
</dbReference>
<dbReference type="PIRSF" id="PIRSF015849">
    <property type="entry name" value="TFIIF-beta"/>
    <property type="match status" value="1"/>
</dbReference>
<dbReference type="SUPFAM" id="SSF50916">
    <property type="entry name" value="Rap30/74 interaction domains"/>
    <property type="match status" value="1"/>
</dbReference>
<dbReference type="SUPFAM" id="SSF46785">
    <property type="entry name" value="Winged helix' DNA-binding domain"/>
    <property type="match status" value="1"/>
</dbReference>
<comment type="function">
    <text evidence="2">TFIIF is a general transcription initiation factor that binds to RNA polymerase II and helps to recruit it to the initiation complex in collaboration with TFIIB.</text>
</comment>
<comment type="subunit">
    <text evidence="1 2 3">Heterodimer of an alpha and a beta subunit. Interacts with HTATSF1 and URI1 (By similarity). Interacts with GPBP1. Interacts with GTF2B (via N-terminus); this interaction is inhibited in presence of GTF2F1 (By similarity). Part of TBP-based Pol II pre-initiation complex (PIC), in which Pol II core assembles with general transcription factors and other specific initiation factors including GTF2E1, GTF2E2, GTF2F1, GTF2F2, TCEA1, ERCC2, ERCC3, GTF2H2, GTF2H3, GTF2H4, GTF2H5, GTF2A1, GTF2A2, GTF2B and TBP; this large multi-subunit PIC complex mediates DNA unwinding and targets Pol II core to the transcription start site where the first phosphodiester bond forms.</text>
</comment>
<comment type="subcellular location">
    <subcellularLocation>
        <location evidence="1">Nucleus</location>
    </subcellularLocation>
</comment>
<comment type="similarity">
    <text evidence="4">Belongs to the TFIIF beta subunit family.</text>
</comment>
<accession>Q8R0A0</accession>
<gene>
    <name type="primary">Gtf2f2</name>
</gene>
<reference key="1">
    <citation type="journal article" date="2004" name="Genome Res.">
        <title>The status, quality, and expansion of the NIH full-length cDNA project: the Mammalian Gene Collection (MGC).</title>
        <authorList>
            <consortium name="The MGC Project Team"/>
        </authorList>
    </citation>
    <scope>NUCLEOTIDE SEQUENCE [LARGE SCALE MRNA]</scope>
    <source>
        <strain>FVB/N</strain>
        <tissue>Mammary gland</tissue>
    </source>
</reference>
<reference key="2">
    <citation type="journal article" date="2003" name="Mol. Cell. Biol.">
        <title>The murine G+C-rich promoter binding protein mGPBP is required for promoter-specific transcription.</title>
        <authorList>
            <person name="Hsu L.-C."/>
            <person name="Liu S."/>
            <person name="Abedinpour F."/>
            <person name="Beech R.D."/>
            <person name="Lahti J.M."/>
            <person name="Kidd V.J."/>
            <person name="Greenspan J.A."/>
            <person name="Yeung C.-Y."/>
        </authorList>
    </citation>
    <scope>INTERACTION WITH GPBP1</scope>
</reference>
<reference key="3">
    <citation type="journal article" date="2010" name="Cell">
        <title>A tissue-specific atlas of mouse protein phosphorylation and expression.</title>
        <authorList>
            <person name="Huttlin E.L."/>
            <person name="Jedrychowski M.P."/>
            <person name="Elias J.E."/>
            <person name="Goswami T."/>
            <person name="Rad R."/>
            <person name="Beausoleil S.A."/>
            <person name="Villen J."/>
            <person name="Haas W."/>
            <person name="Sowa M.E."/>
            <person name="Gygi S.P."/>
        </authorList>
    </citation>
    <scope>IDENTIFICATION BY MASS SPECTROMETRY [LARGE SCALE ANALYSIS]</scope>
    <source>
        <tissue>Kidney</tissue>
        <tissue>Liver</tissue>
        <tissue>Lung</tissue>
        <tissue>Pancreas</tissue>
        <tissue>Spleen</tissue>
        <tissue>Testis</tissue>
    </source>
</reference>
<reference key="4">
    <citation type="journal article" date="2013" name="Mol. Cell">
        <title>SIRT5-mediated lysine desuccinylation impacts diverse metabolic pathways.</title>
        <authorList>
            <person name="Park J."/>
            <person name="Chen Y."/>
            <person name="Tishkoff D.X."/>
            <person name="Peng C."/>
            <person name="Tan M."/>
            <person name="Dai L."/>
            <person name="Xie Z."/>
            <person name="Zhang Y."/>
            <person name="Zwaans B.M."/>
            <person name="Skinner M.E."/>
            <person name="Lombard D.B."/>
            <person name="Zhao Y."/>
        </authorList>
    </citation>
    <scope>ACETYLATION [LARGE SCALE ANALYSIS] AT LYS-137</scope>
    <scope>IDENTIFICATION BY MASS SPECTROMETRY [LARGE SCALE ANALYSIS]</scope>
    <source>
        <tissue>Embryonic fibroblast</tissue>
    </source>
</reference>
<protein>
    <recommendedName>
        <fullName>General transcription factor IIF subunit 2</fullName>
    </recommendedName>
    <alternativeName>
        <fullName>Transcription initiation factor IIF subunit beta</fullName>
        <shortName>TFIIF-beta</shortName>
    </alternativeName>
</protein>